<sequence>MVPQKRSRDDLNGLKSPVRSPKKIAMPAATSASNGVVAGWHSTIEKVVKSVVSIQFAQVASFDCESAVVSEATGFVVDTEMGIIMTNRHVVGAGPFCGYAVFDNHEECELVPIYRDPVHDFGFLKFDPSKIKYMNVQKLRLCPEKAQVGTEIRVVGNDNGEKLSILSGFISRLDRNAPDYGDLTYNDFNTEYIQAAASASGGSSGSPVVDIDGDAIALQAGGSTDASTDFFLPLNRGKRALECILRGDKVTRGTIQTHWMLKPFDECRRLGLSASNEKKQRELFPSTIGMLVAETVLPEGPSAVAATEGDILLSVNSTPISSFITLDSILDEAVGDIVKVTVERNGAEITFDIYVQDLHSITPDRYVEVCGASFQDLSYQLARIYAIPVRGVYVSEVGGSFRLDGQGNESKGWVVDSIDDIDTPDLDTFIKVIAAIPDGRRVSIRYRHLRDLHTTNFTITYIDRKWHSSFRLAVRNDTTGKWDFTDLSKQYPVPKKDEIVPQRATFTDPNLEEADAACAPLSRSFVRVSCMIPYKIDGFPRTMRQSHGLVVDAEKGLVLVSRSIIPYDLCNVSVTFAESVVVPGTVVFMHPLQNYAILQYDPKLVHADIETAKLSSTPLKQGDPVLFMGHNLSLRLVTTRTKVSDVTAITIPPNAGEPYYRALNLDAITVDSTIPNGCTAGVLADPKTGVVRAFWLSCMGERTEGRQHEYRLGIDTSTFLETVQRIRAGKPPQERFLDVEIASVSMIQARIRGVSPEWIAAVEQDNSQRHQLFEVIRTATPINGNSQALKEGDILLSINGKLLTTLTTLSEAGDKEQVTIKLVRNKKEEEIQAPTTDSAFETSQAVFWCGAVLQTPHHAVRQQIKKIHSGVYVSSRAQGSPAYQYLIAPTNFITHVNGTATPDLETFLSVVTKIPDNTYVKLRIVTFDNVAFACSMKMNYHYFPTAEIKKEGNEWVGYSYKDGKRVKESDENVEEQVNEAEKQE</sequence>
<organism>
    <name type="scientific">Yarrowia lipolytica (strain CLIB 122 / E 150)</name>
    <name type="common">Yeast</name>
    <name type="synonym">Candida lipolytica</name>
    <dbReference type="NCBI Taxonomy" id="284591"/>
    <lineage>
        <taxon>Eukaryota</taxon>
        <taxon>Fungi</taxon>
        <taxon>Dikarya</taxon>
        <taxon>Ascomycota</taxon>
        <taxon>Saccharomycotina</taxon>
        <taxon>Dipodascomycetes</taxon>
        <taxon>Dipodascales</taxon>
        <taxon>Dipodascales incertae sedis</taxon>
        <taxon>Yarrowia</taxon>
    </lineage>
</organism>
<reference key="1">
    <citation type="journal article" date="2004" name="Nature">
        <title>Genome evolution in yeasts.</title>
        <authorList>
            <person name="Dujon B."/>
            <person name="Sherman D."/>
            <person name="Fischer G."/>
            <person name="Durrens P."/>
            <person name="Casaregola S."/>
            <person name="Lafontaine I."/>
            <person name="de Montigny J."/>
            <person name="Marck C."/>
            <person name="Neuveglise C."/>
            <person name="Talla E."/>
            <person name="Goffard N."/>
            <person name="Frangeul L."/>
            <person name="Aigle M."/>
            <person name="Anthouard V."/>
            <person name="Babour A."/>
            <person name="Barbe V."/>
            <person name="Barnay S."/>
            <person name="Blanchin S."/>
            <person name="Beckerich J.-M."/>
            <person name="Beyne E."/>
            <person name="Bleykasten C."/>
            <person name="Boisrame A."/>
            <person name="Boyer J."/>
            <person name="Cattolico L."/>
            <person name="Confanioleri F."/>
            <person name="de Daruvar A."/>
            <person name="Despons L."/>
            <person name="Fabre E."/>
            <person name="Fairhead C."/>
            <person name="Ferry-Dumazet H."/>
            <person name="Groppi A."/>
            <person name="Hantraye F."/>
            <person name="Hennequin C."/>
            <person name="Jauniaux N."/>
            <person name="Joyet P."/>
            <person name="Kachouri R."/>
            <person name="Kerrest A."/>
            <person name="Koszul R."/>
            <person name="Lemaire M."/>
            <person name="Lesur I."/>
            <person name="Ma L."/>
            <person name="Muller H."/>
            <person name="Nicaud J.-M."/>
            <person name="Nikolski M."/>
            <person name="Oztas S."/>
            <person name="Ozier-Kalogeropoulos O."/>
            <person name="Pellenz S."/>
            <person name="Potier S."/>
            <person name="Richard G.-F."/>
            <person name="Straub M.-L."/>
            <person name="Suleau A."/>
            <person name="Swennen D."/>
            <person name="Tekaia F."/>
            <person name="Wesolowski-Louvel M."/>
            <person name="Westhof E."/>
            <person name="Wirth B."/>
            <person name="Zeniou-Meyer M."/>
            <person name="Zivanovic Y."/>
            <person name="Bolotin-Fukuhara M."/>
            <person name="Thierry A."/>
            <person name="Bouchier C."/>
            <person name="Caudron B."/>
            <person name="Scarpelli C."/>
            <person name="Gaillardin C."/>
            <person name="Weissenbach J."/>
            <person name="Wincker P."/>
            <person name="Souciet J.-L."/>
        </authorList>
    </citation>
    <scope>NUCLEOTIDE SEQUENCE [LARGE SCALE GENOMIC DNA]</scope>
    <source>
        <strain>CLIB 122 / E 150</strain>
    </source>
</reference>
<keyword id="KW-0053">Apoptosis</keyword>
<keyword id="KW-0378">Hydrolase</keyword>
<keyword id="KW-0539">Nucleus</keyword>
<keyword id="KW-0645">Protease</keyword>
<keyword id="KW-1185">Reference proteome</keyword>
<keyword id="KW-0677">Repeat</keyword>
<keyword id="KW-0720">Serine protease</keyword>
<feature type="chain" id="PRO_0000320362" description="Pro-apoptotic serine protease NMA111">
    <location>
        <begin position="1"/>
        <end position="984"/>
    </location>
</feature>
<feature type="domain" description="PDZ 1">
    <location>
        <begin position="268"/>
        <end position="346"/>
    </location>
</feature>
<feature type="domain" description="PDZ 2">
    <location>
        <begin position="756"/>
        <end position="826"/>
    </location>
</feature>
<feature type="region of interest" description="Serine protease">
    <location>
        <begin position="51"/>
        <end position="241"/>
    </location>
</feature>
<feature type="active site" description="Charge relay system" evidence="2">
    <location>
        <position position="89"/>
    </location>
</feature>
<feature type="active site" description="Charge relay system" evidence="2">
    <location>
        <position position="120"/>
    </location>
</feature>
<feature type="active site" description="Charge relay system" evidence="2">
    <location>
        <position position="203"/>
    </location>
</feature>
<gene>
    <name type="primary">NMA111</name>
    <name type="ordered locus">YALI0F31603g</name>
</gene>
<protein>
    <recommendedName>
        <fullName>Pro-apoptotic serine protease NMA111</fullName>
        <ecNumber>3.4.21.-</ecNumber>
    </recommendedName>
</protein>
<evidence type="ECO:0000250" key="1"/>
<evidence type="ECO:0000255" key="2"/>
<evidence type="ECO:0000305" key="3"/>
<name>NM111_YARLI</name>
<proteinExistence type="inferred from homology"/>
<dbReference type="EC" id="3.4.21.-"/>
<dbReference type="EMBL" id="CR382132">
    <property type="protein sequence ID" value="CAG78916.1"/>
    <property type="status" value="ALT_SEQ"/>
    <property type="molecule type" value="Genomic_DNA"/>
</dbReference>
<dbReference type="RefSeq" id="XP_506103.1">
    <property type="nucleotide sequence ID" value="XM_506103.1"/>
</dbReference>
<dbReference type="SMR" id="Q6BZQ9"/>
<dbReference type="FunCoup" id="Q6BZQ9">
    <property type="interactions" value="135"/>
</dbReference>
<dbReference type="STRING" id="284591.Q6BZQ9"/>
<dbReference type="KEGG" id="yli:2907906"/>
<dbReference type="InParanoid" id="Q6BZQ9"/>
<dbReference type="OrthoDB" id="106160at4891"/>
<dbReference type="Proteomes" id="UP000001300">
    <property type="component" value="Chromosome F"/>
</dbReference>
<dbReference type="GO" id="GO:0005634">
    <property type="term" value="C:nucleus"/>
    <property type="evidence" value="ECO:0000318"/>
    <property type="project" value="GO_Central"/>
</dbReference>
<dbReference type="GO" id="GO:0004252">
    <property type="term" value="F:serine-type endopeptidase activity"/>
    <property type="evidence" value="ECO:0000318"/>
    <property type="project" value="GO_Central"/>
</dbReference>
<dbReference type="GO" id="GO:0006915">
    <property type="term" value="P:apoptotic process"/>
    <property type="evidence" value="ECO:0007669"/>
    <property type="project" value="UniProtKB-KW"/>
</dbReference>
<dbReference type="GO" id="GO:0043065">
    <property type="term" value="P:positive regulation of apoptotic process"/>
    <property type="evidence" value="ECO:0000318"/>
    <property type="project" value="GO_Central"/>
</dbReference>
<dbReference type="GO" id="GO:0006508">
    <property type="term" value="P:proteolysis"/>
    <property type="evidence" value="ECO:0007669"/>
    <property type="project" value="UniProtKB-KW"/>
</dbReference>
<dbReference type="CDD" id="cd06786">
    <property type="entry name" value="cpPDZ1_ScNma111-like"/>
    <property type="match status" value="1"/>
</dbReference>
<dbReference type="CDD" id="cd06719">
    <property type="entry name" value="PDZ2-4_Nma111p-like"/>
    <property type="match status" value="2"/>
</dbReference>
<dbReference type="Gene3D" id="2.30.42.10">
    <property type="match status" value="2"/>
</dbReference>
<dbReference type="Gene3D" id="2.40.10.120">
    <property type="match status" value="2"/>
</dbReference>
<dbReference type="InterPro" id="IPR001478">
    <property type="entry name" value="PDZ"/>
</dbReference>
<dbReference type="InterPro" id="IPR025926">
    <property type="entry name" value="PDZ-like_dom"/>
</dbReference>
<dbReference type="InterPro" id="IPR036034">
    <property type="entry name" value="PDZ_sf"/>
</dbReference>
<dbReference type="InterPro" id="IPR009003">
    <property type="entry name" value="Peptidase_S1_PA"/>
</dbReference>
<dbReference type="InterPro" id="IPR001940">
    <property type="entry name" value="Peptidase_S1C"/>
</dbReference>
<dbReference type="PANTHER" id="PTHR46366">
    <property type="entry name" value="PRO-APOPTOTIC SERINE PROTEASE NMA111"/>
    <property type="match status" value="1"/>
</dbReference>
<dbReference type="PANTHER" id="PTHR46366:SF8">
    <property type="entry name" value="PRO-APOPTOTIC SERINE PROTEASE NMA111"/>
    <property type="match status" value="1"/>
</dbReference>
<dbReference type="Pfam" id="PF12812">
    <property type="entry name" value="PDZ_1"/>
    <property type="match status" value="2"/>
</dbReference>
<dbReference type="Pfam" id="PF13365">
    <property type="entry name" value="Trypsin_2"/>
    <property type="match status" value="1"/>
</dbReference>
<dbReference type="PRINTS" id="PR00834">
    <property type="entry name" value="PROTEASES2C"/>
</dbReference>
<dbReference type="SMART" id="SM00228">
    <property type="entry name" value="PDZ"/>
    <property type="match status" value="3"/>
</dbReference>
<dbReference type="SUPFAM" id="SSF50156">
    <property type="entry name" value="PDZ domain-like"/>
    <property type="match status" value="3"/>
</dbReference>
<dbReference type="SUPFAM" id="SSF50494">
    <property type="entry name" value="Trypsin-like serine proteases"/>
    <property type="match status" value="2"/>
</dbReference>
<comment type="function">
    <text evidence="1">Nuclear serine protease which mediates apoptosis.</text>
</comment>
<comment type="subcellular location">
    <subcellularLocation>
        <location evidence="1">Nucleus</location>
    </subcellularLocation>
</comment>
<comment type="similarity">
    <text evidence="3">Belongs to the peptidase S1C family.</text>
</comment>
<comment type="sequence caution" evidence="3">
    <conflict type="erroneous gene model prediction">
        <sequence resource="EMBL-CDS" id="CAG78916"/>
    </conflict>
</comment>
<accession>Q6BZQ9</accession>